<sequence>MHIYKEQEAEPSTGLMMPEPAPVASPGSGGSGGSGSVGAEKIGSRGKIEIKRIENTTNRQVTFCKRRSGLLKKAYELSVLCDAEVALVVFSSRGRLYEYSNNSVKETIERYKKANSDTSNASTVAEINAQHYQQEAAKLKQQITNLQNSNRTLVGDNITTMNHRELKQLEGRLDKGLGKIRARKNELLCAEIEYMQRRETELQNDNMYLKSKVAESERGLQTVNMMGSASTSEYVQNMIHYDPRNFLQFNIMHQPQYYPEQEDRKAFMSDER</sequence>
<comment type="function">
    <text evidence="4">Probable transcription factor involved in the development of floral organs. Acts as a C-class protein in association with MADS3. Involved in the control of lodicule number (whorl 2), stamen specification (whorl 3), floral meristem determinacy and regulation of the carpel morphogenesis (whorl 4). Plays a more predominant role in floral meristem determinacy than MADS3.</text>
</comment>
<comment type="subcellular location">
    <subcellularLocation>
        <location evidence="6">Nucleus</location>
    </subcellularLocation>
</comment>
<comment type="alternative products">
    <event type="alternative splicing"/>
    <isoform>
        <id>Q2V0P1-1</id>
        <name>1</name>
        <sequence type="displayed"/>
    </isoform>
    <isoform>
        <id>Q2V0P1-2</id>
        <name>2</name>
        <sequence type="described" ref="VSP_017790"/>
    </isoform>
</comment>
<comment type="tissue specificity">
    <text>Expressed in the lodicule, stamen carpel and ovule primordia.</text>
</comment>
<comment type="developmental stage">
    <text evidence="4">Expressed in lodicules, stamens, carpels and ovules during their development.</text>
</comment>
<comment type="disruption phenotype">
    <text evidence="4">Abnormal flowers with floral-like organs.</text>
</comment>
<protein>
    <recommendedName>
        <fullName>MADS-box transcription factor 58</fullName>
    </recommendedName>
    <alternativeName>
        <fullName>OsMADS58</fullName>
    </alternativeName>
</protein>
<gene>
    <name type="primary">MADS58</name>
    <name type="ordered locus">Os05g0203800</name>
    <name type="ordered locus">LOC_Os05g11414</name>
    <name type="ORF">OSJNBa0015G13.8</name>
</gene>
<evidence type="ECO:0000255" key="1">
    <source>
        <dbReference type="PROSITE-ProRule" id="PRU00251"/>
    </source>
</evidence>
<evidence type="ECO:0000255" key="2">
    <source>
        <dbReference type="PROSITE-ProRule" id="PRU00629"/>
    </source>
</evidence>
<evidence type="ECO:0000256" key="3">
    <source>
        <dbReference type="SAM" id="MobiDB-lite"/>
    </source>
</evidence>
<evidence type="ECO:0000269" key="4">
    <source>
    </source>
</evidence>
<evidence type="ECO:0000303" key="5">
    <source>
    </source>
</evidence>
<evidence type="ECO:0000305" key="6"/>
<accession>Q2V0P1</accession>
<accession>Q6ATK6</accession>
<dbReference type="EMBL" id="AB232157">
    <property type="protein sequence ID" value="BAE54300.1"/>
    <property type="molecule type" value="mRNA"/>
</dbReference>
<dbReference type="EMBL" id="AC135920">
    <property type="protein sequence ID" value="AAT85114.1"/>
    <property type="molecule type" value="Genomic_DNA"/>
</dbReference>
<dbReference type="EMBL" id="AP014961">
    <property type="protein sequence ID" value="BAS92735.1"/>
    <property type="molecule type" value="Genomic_DNA"/>
</dbReference>
<dbReference type="EMBL" id="AK111723">
    <property type="status" value="NOT_ANNOTATED_CDS"/>
    <property type="molecule type" value="mRNA"/>
</dbReference>
<dbReference type="SMR" id="Q2V0P1"/>
<dbReference type="FunCoup" id="Q2V0P1">
    <property type="interactions" value="55"/>
</dbReference>
<dbReference type="STRING" id="39947.Q2V0P1"/>
<dbReference type="PaxDb" id="39947-Q2V0P1"/>
<dbReference type="EnsemblPlants" id="Os05t0203800-02">
    <molecule id="Q2V0P1-1"/>
    <property type="protein sequence ID" value="Os05t0203800-02"/>
    <property type="gene ID" value="Os05g0203800"/>
</dbReference>
<dbReference type="Gramene" id="Os05t0203800-02">
    <molecule id="Q2V0P1-1"/>
    <property type="protein sequence ID" value="Os05t0203800-02"/>
    <property type="gene ID" value="Os05g0203800"/>
</dbReference>
<dbReference type="eggNOG" id="KOG0014">
    <property type="taxonomic scope" value="Eukaryota"/>
</dbReference>
<dbReference type="InParanoid" id="Q2V0P1"/>
<dbReference type="OMA" id="NSSIWIN"/>
<dbReference type="PlantReactome" id="R-OSA-9609102">
    <property type="pathway name" value="Flower development"/>
</dbReference>
<dbReference type="Proteomes" id="UP000000763">
    <property type="component" value="Chromosome 5"/>
</dbReference>
<dbReference type="Proteomes" id="UP000059680">
    <property type="component" value="Chromosome 5"/>
</dbReference>
<dbReference type="ExpressionAtlas" id="Q2V0P1">
    <property type="expression patterns" value="baseline and differential"/>
</dbReference>
<dbReference type="GO" id="GO:0005634">
    <property type="term" value="C:nucleus"/>
    <property type="evidence" value="ECO:0007669"/>
    <property type="project" value="UniProtKB-SubCell"/>
</dbReference>
<dbReference type="GO" id="GO:0000981">
    <property type="term" value="F:DNA-binding transcription factor activity, RNA polymerase II-specific"/>
    <property type="evidence" value="ECO:0000318"/>
    <property type="project" value="GO_Central"/>
</dbReference>
<dbReference type="GO" id="GO:0046983">
    <property type="term" value="F:protein dimerization activity"/>
    <property type="evidence" value="ECO:0007669"/>
    <property type="project" value="InterPro"/>
</dbReference>
<dbReference type="GO" id="GO:0000978">
    <property type="term" value="F:RNA polymerase II cis-regulatory region sequence-specific DNA binding"/>
    <property type="evidence" value="ECO:0000318"/>
    <property type="project" value="GO_Central"/>
</dbReference>
<dbReference type="GO" id="GO:0048440">
    <property type="term" value="P:carpel development"/>
    <property type="evidence" value="ECO:0000304"/>
    <property type="project" value="AgBase"/>
</dbReference>
<dbReference type="GO" id="GO:0030154">
    <property type="term" value="P:cell differentiation"/>
    <property type="evidence" value="ECO:0007669"/>
    <property type="project" value="UniProtKB-KW"/>
</dbReference>
<dbReference type="GO" id="GO:0010582">
    <property type="term" value="P:floral meristem determinacy"/>
    <property type="evidence" value="ECO:0000304"/>
    <property type="project" value="AgBase"/>
</dbReference>
<dbReference type="GO" id="GO:0045944">
    <property type="term" value="P:positive regulation of transcription by RNA polymerase II"/>
    <property type="evidence" value="ECO:0007669"/>
    <property type="project" value="InterPro"/>
</dbReference>
<dbReference type="GO" id="GO:0006357">
    <property type="term" value="P:regulation of transcription by RNA polymerase II"/>
    <property type="evidence" value="ECO:0000318"/>
    <property type="project" value="GO_Central"/>
</dbReference>
<dbReference type="CDD" id="cd00265">
    <property type="entry name" value="MADS_MEF2_like"/>
    <property type="match status" value="1"/>
</dbReference>
<dbReference type="FunFam" id="3.40.1810.10:FF:000009">
    <property type="entry name" value="agamous-like MADS-box protein AGL11"/>
    <property type="match status" value="1"/>
</dbReference>
<dbReference type="Gene3D" id="3.40.1810.10">
    <property type="entry name" value="Transcription factor, MADS-box"/>
    <property type="match status" value="1"/>
</dbReference>
<dbReference type="InterPro" id="IPR050142">
    <property type="entry name" value="MADS-box/MEF2_TF"/>
</dbReference>
<dbReference type="InterPro" id="IPR033896">
    <property type="entry name" value="MEF2-like_N"/>
</dbReference>
<dbReference type="InterPro" id="IPR002487">
    <property type="entry name" value="TF_Kbox"/>
</dbReference>
<dbReference type="InterPro" id="IPR002100">
    <property type="entry name" value="TF_MADSbox"/>
</dbReference>
<dbReference type="InterPro" id="IPR036879">
    <property type="entry name" value="TF_MADSbox_sf"/>
</dbReference>
<dbReference type="PANTHER" id="PTHR48019">
    <property type="entry name" value="SERUM RESPONSE FACTOR HOMOLOG"/>
    <property type="match status" value="1"/>
</dbReference>
<dbReference type="Pfam" id="PF01486">
    <property type="entry name" value="K-box"/>
    <property type="match status" value="1"/>
</dbReference>
<dbReference type="Pfam" id="PF00319">
    <property type="entry name" value="SRF-TF"/>
    <property type="match status" value="1"/>
</dbReference>
<dbReference type="PRINTS" id="PR00404">
    <property type="entry name" value="MADSDOMAIN"/>
</dbReference>
<dbReference type="SMART" id="SM00432">
    <property type="entry name" value="MADS"/>
    <property type="match status" value="1"/>
</dbReference>
<dbReference type="SUPFAM" id="SSF55455">
    <property type="entry name" value="SRF-like"/>
    <property type="match status" value="1"/>
</dbReference>
<dbReference type="PROSITE" id="PS51297">
    <property type="entry name" value="K_BOX"/>
    <property type="match status" value="1"/>
</dbReference>
<dbReference type="PROSITE" id="PS00350">
    <property type="entry name" value="MADS_BOX_1"/>
    <property type="match status" value="1"/>
</dbReference>
<dbReference type="PROSITE" id="PS50066">
    <property type="entry name" value="MADS_BOX_2"/>
    <property type="match status" value="1"/>
</dbReference>
<name>MAD58_ORYSJ</name>
<reference key="1">
    <citation type="journal article" date="2006" name="Plant Cell">
        <title>Functional diversification of the two C-class MADS box genes OSMADS3 and OSMADS58 in Oryza sativa.</title>
        <authorList>
            <person name="Yamaguchi T."/>
            <person name="Lee D.-Y."/>
            <person name="Miyao A."/>
            <person name="Hirochika H."/>
            <person name="An G."/>
            <person name="Hirano H."/>
        </authorList>
    </citation>
    <scope>NUCLEOTIDE SEQUENCE [MRNA] (ISOFORM 1)</scope>
    <scope>FUNCTION</scope>
    <scope>DEVELOPMENTAL STAGE</scope>
    <scope>DISRUPTION PHENOTYPE</scope>
</reference>
<reference key="2">
    <citation type="journal article" date="2005" name="Mol. Genet. Genomics">
        <title>A fine physical map of the rice chromosome 5.</title>
        <authorList>
            <person name="Cheng C.-H."/>
            <person name="Chung M.C."/>
            <person name="Liu S.-M."/>
            <person name="Chen S.-K."/>
            <person name="Kao F.Y."/>
            <person name="Lin S.-J."/>
            <person name="Hsiao S.-H."/>
            <person name="Tseng I.C."/>
            <person name="Hsing Y.-I.C."/>
            <person name="Wu H.-P."/>
            <person name="Chen C.-S."/>
            <person name="Shaw J.-F."/>
            <person name="Wu J."/>
            <person name="Matsumoto T."/>
            <person name="Sasaki T."/>
            <person name="Chen H.-C."/>
            <person name="Chow T.-Y."/>
        </authorList>
    </citation>
    <scope>NUCLEOTIDE SEQUENCE [LARGE SCALE GENOMIC DNA]</scope>
    <source>
        <strain>cv. Nipponbare</strain>
    </source>
</reference>
<reference key="3">
    <citation type="journal article" date="2005" name="Nature">
        <title>The map-based sequence of the rice genome.</title>
        <authorList>
            <consortium name="International rice genome sequencing project (IRGSP)"/>
        </authorList>
    </citation>
    <scope>NUCLEOTIDE SEQUENCE [LARGE SCALE GENOMIC DNA]</scope>
    <source>
        <strain>cv. Nipponbare</strain>
    </source>
</reference>
<reference key="4">
    <citation type="journal article" date="2013" name="Rice">
        <title>Improvement of the Oryza sativa Nipponbare reference genome using next generation sequence and optical map data.</title>
        <authorList>
            <person name="Kawahara Y."/>
            <person name="de la Bastide M."/>
            <person name="Hamilton J.P."/>
            <person name="Kanamori H."/>
            <person name="McCombie W.R."/>
            <person name="Ouyang S."/>
            <person name="Schwartz D.C."/>
            <person name="Tanaka T."/>
            <person name="Wu J."/>
            <person name="Zhou S."/>
            <person name="Childs K.L."/>
            <person name="Davidson R.M."/>
            <person name="Lin H."/>
            <person name="Quesada-Ocampo L."/>
            <person name="Vaillancourt B."/>
            <person name="Sakai H."/>
            <person name="Lee S.S."/>
            <person name="Kim J."/>
            <person name="Numa H."/>
            <person name="Itoh T."/>
            <person name="Buell C.R."/>
            <person name="Matsumoto T."/>
        </authorList>
    </citation>
    <scope>GENOME REANNOTATION</scope>
    <source>
        <strain>cv. Nipponbare</strain>
    </source>
</reference>
<reference key="5">
    <citation type="journal article" date="2003" name="Science">
        <title>Collection, mapping, and annotation of over 28,000 cDNA clones from japonica rice.</title>
        <authorList>
            <consortium name="The rice full-length cDNA consortium"/>
        </authorList>
    </citation>
    <scope>NUCLEOTIDE SEQUENCE [LARGE SCALE MRNA] (ISOFORM 2)</scope>
    <source>
        <strain>cv. Nipponbare</strain>
    </source>
</reference>
<proteinExistence type="evidence at transcript level"/>
<feature type="chain" id="PRO_0000229920" description="MADS-box transcription factor 58">
    <location>
        <begin position="1"/>
        <end position="272"/>
    </location>
</feature>
<feature type="domain" description="MADS-box" evidence="1">
    <location>
        <begin position="43"/>
        <end position="103"/>
    </location>
</feature>
<feature type="domain" description="K-box" evidence="2">
    <location>
        <begin position="129"/>
        <end position="219"/>
    </location>
</feature>
<feature type="region of interest" description="Disordered" evidence="3">
    <location>
        <begin position="1"/>
        <end position="41"/>
    </location>
</feature>
<feature type="compositionally biased region" description="Gly residues" evidence="3">
    <location>
        <begin position="27"/>
        <end position="36"/>
    </location>
</feature>
<feature type="splice variant" id="VSP_017790" description="In isoform 2." evidence="5">
    <location>
        <begin position="234"/>
        <end position="272"/>
    </location>
</feature>
<keyword id="KW-0010">Activator</keyword>
<keyword id="KW-0025">Alternative splicing</keyword>
<keyword id="KW-0217">Developmental protein</keyword>
<keyword id="KW-0221">Differentiation</keyword>
<keyword id="KW-0238">DNA-binding</keyword>
<keyword id="KW-0287">Flowering</keyword>
<keyword id="KW-0539">Nucleus</keyword>
<keyword id="KW-1185">Reference proteome</keyword>
<keyword id="KW-0804">Transcription</keyword>
<keyword id="KW-0805">Transcription regulation</keyword>
<organism>
    <name type="scientific">Oryza sativa subsp. japonica</name>
    <name type="common">Rice</name>
    <dbReference type="NCBI Taxonomy" id="39947"/>
    <lineage>
        <taxon>Eukaryota</taxon>
        <taxon>Viridiplantae</taxon>
        <taxon>Streptophyta</taxon>
        <taxon>Embryophyta</taxon>
        <taxon>Tracheophyta</taxon>
        <taxon>Spermatophyta</taxon>
        <taxon>Magnoliopsida</taxon>
        <taxon>Liliopsida</taxon>
        <taxon>Poales</taxon>
        <taxon>Poaceae</taxon>
        <taxon>BOP clade</taxon>
        <taxon>Oryzoideae</taxon>
        <taxon>Oryzeae</taxon>
        <taxon>Oryzinae</taxon>
        <taxon>Oryza</taxon>
        <taxon>Oryza sativa</taxon>
    </lineage>
</organism>